<name>DRL22_ARATH</name>
<keyword id="KW-0067">ATP-binding</keyword>
<keyword id="KW-0175">Coiled coil</keyword>
<keyword id="KW-0547">Nucleotide-binding</keyword>
<keyword id="KW-0611">Plant defense</keyword>
<keyword id="KW-1185">Reference proteome</keyword>
<organism>
    <name type="scientific">Arabidopsis thaliana</name>
    <name type="common">Mouse-ear cress</name>
    <dbReference type="NCBI Taxonomy" id="3702"/>
    <lineage>
        <taxon>Eukaryota</taxon>
        <taxon>Viridiplantae</taxon>
        <taxon>Streptophyta</taxon>
        <taxon>Embryophyta</taxon>
        <taxon>Tracheophyta</taxon>
        <taxon>Spermatophyta</taxon>
        <taxon>Magnoliopsida</taxon>
        <taxon>eudicotyledons</taxon>
        <taxon>Gunneridae</taxon>
        <taxon>Pentapetalae</taxon>
        <taxon>rosids</taxon>
        <taxon>malvids</taxon>
        <taxon>Brassicales</taxon>
        <taxon>Brassicaceae</taxon>
        <taxon>Camelineae</taxon>
        <taxon>Arabidopsis</taxon>
    </lineage>
</organism>
<accession>Q9LW09</accession>
<reference key="1">
    <citation type="journal article" date="2000" name="DNA Res.">
        <title>Structural analysis of Arabidopsis thaliana chromosome 3. I. Sequence features of the regions of 4,504,864 bp covered by sixty P1 and TAC clones.</title>
        <authorList>
            <person name="Sato S."/>
            <person name="Nakamura Y."/>
            <person name="Kaneko T."/>
            <person name="Katoh T."/>
            <person name="Asamizu E."/>
            <person name="Tabata S."/>
        </authorList>
    </citation>
    <scope>NUCLEOTIDE SEQUENCE [LARGE SCALE GENOMIC DNA]</scope>
    <source>
        <strain>cv. Columbia</strain>
    </source>
</reference>
<reference key="2">
    <citation type="journal article" date="2017" name="Plant J.">
        <title>Araport11: a complete reannotation of the Arabidopsis thaliana reference genome.</title>
        <authorList>
            <person name="Cheng C.Y."/>
            <person name="Krishnakumar V."/>
            <person name="Chan A.P."/>
            <person name="Thibaud-Nissen F."/>
            <person name="Schobel S."/>
            <person name="Town C.D."/>
        </authorList>
    </citation>
    <scope>GENOME REANNOTATION</scope>
    <source>
        <strain>cv. Columbia</strain>
    </source>
</reference>
<comment type="function">
    <text evidence="1">Potential disease resistance protein.</text>
</comment>
<comment type="caution">
    <text evidence="3">Although strongly related to the NB-LRR family, it is shorter and lacks the LRR repeats that are present in other proteins of the family.</text>
</comment>
<comment type="online information" name="NIB-LRRS">
    <link uri="http://niblrrs.ucdavis.edu"/>
    <text>Functional and comparative genomics of disease resistance gene homologs</text>
</comment>
<gene>
    <name type="ordered locus">At3g15700</name>
    <name type="ORF">MSJ11.10</name>
</gene>
<proteinExistence type="inferred from homology"/>
<protein>
    <recommendedName>
        <fullName>Putative disease resistance protein At3g15700</fullName>
    </recommendedName>
</protein>
<dbReference type="EMBL" id="AB017071">
    <property type="protein sequence ID" value="BAB02301.1"/>
    <property type="molecule type" value="Genomic_DNA"/>
</dbReference>
<dbReference type="EMBL" id="CP002686">
    <property type="protein sequence ID" value="ANM65825.1"/>
    <property type="molecule type" value="Genomic_DNA"/>
</dbReference>
<dbReference type="RefSeq" id="NP_188191.1">
    <property type="nucleotide sequence ID" value="NM_112440.2"/>
</dbReference>
<dbReference type="SMR" id="Q9LW09"/>
<dbReference type="STRING" id="3702.Q9LW09"/>
<dbReference type="PaxDb" id="3702-AT3G15700.1"/>
<dbReference type="EnsemblPlants" id="AT3G15700.2">
    <property type="protein sequence ID" value="AT3G15700.2"/>
    <property type="gene ID" value="AT3G15700"/>
</dbReference>
<dbReference type="GeneID" id="820813"/>
<dbReference type="Gramene" id="AT3G15700.2">
    <property type="protein sequence ID" value="AT3G15700.2"/>
    <property type="gene ID" value="AT3G15700"/>
</dbReference>
<dbReference type="KEGG" id="ath:AT3G15700"/>
<dbReference type="Araport" id="AT3G15700"/>
<dbReference type="TAIR" id="AT3G15700"/>
<dbReference type="eggNOG" id="KOG4658">
    <property type="taxonomic scope" value="Eukaryota"/>
</dbReference>
<dbReference type="HOGENOM" id="CLU_000427_1_2_1"/>
<dbReference type="InParanoid" id="Q9LW09"/>
<dbReference type="PhylomeDB" id="Q9LW09"/>
<dbReference type="PRO" id="PR:Q9LW09"/>
<dbReference type="Proteomes" id="UP000006548">
    <property type="component" value="Chromosome 3"/>
</dbReference>
<dbReference type="ExpressionAtlas" id="Q9LW09">
    <property type="expression patterns" value="baseline and differential"/>
</dbReference>
<dbReference type="GO" id="GO:0005829">
    <property type="term" value="C:cytosol"/>
    <property type="evidence" value="ECO:0007005"/>
    <property type="project" value="TAIR"/>
</dbReference>
<dbReference type="GO" id="GO:0043531">
    <property type="term" value="F:ADP binding"/>
    <property type="evidence" value="ECO:0007669"/>
    <property type="project" value="InterPro"/>
</dbReference>
<dbReference type="GO" id="GO:0005524">
    <property type="term" value="F:ATP binding"/>
    <property type="evidence" value="ECO:0007669"/>
    <property type="project" value="UniProtKB-KW"/>
</dbReference>
<dbReference type="GO" id="GO:0006952">
    <property type="term" value="P:defense response"/>
    <property type="evidence" value="ECO:0007669"/>
    <property type="project" value="UniProtKB-KW"/>
</dbReference>
<dbReference type="FunFam" id="3.40.50.300:FF:001091">
    <property type="entry name" value="Probable disease resistance protein At1g61300"/>
    <property type="match status" value="1"/>
</dbReference>
<dbReference type="FunFam" id="1.10.8.430:FF:000003">
    <property type="entry name" value="Probable disease resistance protein At5g66910"/>
    <property type="match status" value="1"/>
</dbReference>
<dbReference type="Gene3D" id="1.10.8.430">
    <property type="entry name" value="Helical domain of apoptotic protease-activating factors"/>
    <property type="match status" value="1"/>
</dbReference>
<dbReference type="Gene3D" id="3.40.50.300">
    <property type="entry name" value="P-loop containing nucleotide triphosphate hydrolases"/>
    <property type="match status" value="1"/>
</dbReference>
<dbReference type="InterPro" id="IPR042197">
    <property type="entry name" value="Apaf_helical"/>
</dbReference>
<dbReference type="InterPro" id="IPR002182">
    <property type="entry name" value="NB-ARC"/>
</dbReference>
<dbReference type="InterPro" id="IPR027417">
    <property type="entry name" value="P-loop_NTPase"/>
</dbReference>
<dbReference type="InterPro" id="IPR050905">
    <property type="entry name" value="Plant_NBS-LRR"/>
</dbReference>
<dbReference type="PANTHER" id="PTHR33463:SF220">
    <property type="entry name" value="NB-ARC DOMAIN-CONTAINING PROTEIN"/>
    <property type="match status" value="1"/>
</dbReference>
<dbReference type="PANTHER" id="PTHR33463">
    <property type="entry name" value="NB-ARC DOMAIN-CONTAINING PROTEIN-RELATED"/>
    <property type="match status" value="1"/>
</dbReference>
<dbReference type="Pfam" id="PF00931">
    <property type="entry name" value="NB-ARC"/>
    <property type="match status" value="1"/>
</dbReference>
<dbReference type="PRINTS" id="PR00364">
    <property type="entry name" value="DISEASERSIST"/>
</dbReference>
<dbReference type="SUPFAM" id="SSF52540">
    <property type="entry name" value="P-loop containing nucleoside triphosphate hydrolases"/>
    <property type="match status" value="1"/>
</dbReference>
<feature type="chain" id="PRO_0000212754" description="Putative disease resistance protein At3g15700">
    <location>
        <begin position="1"/>
        <end position="375"/>
    </location>
</feature>
<feature type="domain" description="NB-ARC">
    <location>
        <begin position="158"/>
        <end position="372"/>
    </location>
</feature>
<feature type="coiled-coil region" evidence="2">
    <location>
        <begin position="17"/>
        <end position="49"/>
    </location>
</feature>
<feature type="binding site" evidence="2">
    <location>
        <begin position="167"/>
        <end position="174"/>
    </location>
    <ligand>
        <name>ATP</name>
        <dbReference type="ChEBI" id="CHEBI:30616"/>
    </ligand>
</feature>
<sequence>MGKDFKSMVTRCIYVGKENDNVKKLKTATEELKDLRNIVMKRVKMYEDQQKLKRLEKVQVWLRQADVAIKEAEEMLITLMSSSSSNGSSMMSFHKLDKKLCKKLKEVQEIKSRGTFDVVVENSGIGSGSMMISNVDRDDQTVGLEAVSGLVWRCMTVDNTGIIGLYGVEGVGKTTVLTQVNNRLLQHKLNGFDFVIWVFVSKNVNLEKIQDTIREKIGFLDRSWMSKTEEEKAGKIFEILSKRRFALFLDDVWEKVDLVKAGVPPPDGLNRSKIVFTTCSDEVCQEMGAQTKIKMEKLPWERAWDLFKMNAGEEIVKSHPDITKVAQEVAAKCDGLPLALVTIGRAMASKKTPQEWRDALYILSTSPPNFSGPIL</sequence>
<evidence type="ECO:0000250" key="1"/>
<evidence type="ECO:0000255" key="2"/>
<evidence type="ECO:0000305" key="3"/>